<reference evidence="12" key="1">
    <citation type="journal article" date="2014" name="Toxicon">
        <title>Hemorrhagin VaH4, a covalent heterodimeric P-III metalloproteinase from Vipera ammodytes ammodytes with a potential antitumour activity.</title>
        <authorList>
            <person name="Leonardi A."/>
            <person name="Sajevic T."/>
            <person name="Kovacic L."/>
            <person name="Pungercar J."/>
            <person name="Lang Balija M."/>
            <person name="Halassy B."/>
            <person name="Trampus Bakija A."/>
            <person name="Krizaj I."/>
        </authorList>
    </citation>
    <scope>NUCLEOTIDE SEQUENCE [MRNA]</scope>
    <scope>PROTEIN SEQUENCE OF 198-216; 263-283; 287-383 AND 391-405</scope>
    <scope>FUNCTION</scope>
    <scope>CATALYTIC ACTIVITY</scope>
    <scope>ACTIVITY REGULATION</scope>
    <scope>BIOPHYSICOCHEMICAL PROPERTIES</scope>
    <scope>SUBUNIT</scope>
    <scope>SUBCELLULAR LOCATION</scope>
    <scope>TISSUE SPECIFICITY</scope>
    <scope>GLYCOSYLATION</scope>
    <scope>PTM</scope>
    <scope>IDENTIFICATION BY MASS SPECTROMETRY</scope>
    <scope>MOTIF</scope>
    <scope>DISULFIDE BOND</scope>
    <scope>3D-STRUCTURE MODELING</scope>
    <source>
        <tissue evidence="9">Venom</tissue>
        <tissue evidence="9">Venom gland</tissue>
    </source>
</reference>
<proteinExistence type="evidence at protein level"/>
<comment type="function">
    <text evidence="8">Heterodimer (A and B subunits): Zinc metalloprotease that has fibrinogenolytic and hemorrhagic activities. Cleaves insulin B chain preferably at '40-Tyr-|-Leu-41' bond, but also at '28-Gln-|-His-29' and '34-His-|-Leu-35' bonds. Hydrolyzes effectively isolated extracellular matrix (ECM) bovine fibronectin, and only slightly, basal membrane (BM) proteins human collagen IV and murine laminin, in vitro. Cleaves nidogen-1 (at '350-Ser-|-Phe-351' and '380-Tyr-|-Asn-381' bonds), but not laminin, in a solubilized BM preparation. Hydrolyzes plasma proteins involved in blood coagulation in vitro. It slightly shortens prothrombin time and significantly prolongs thrombin time. Has potent alpha-fibrinogenase activity cleaving human fibrinogen alpha chain at '441-Glu-|-Leu-442' and '539-Glu-|-Phe-540' bonds, and to a lesser extent, beta chain at '52-Lys-|-Arg-53' and '48-Pro-|-Leu-49' bonds, but does not cleave gamma chain. Hydrolyzes bovine prothrombin at '200-Ser-|-Gly-201' bond, but does not activate it, however, it cleaves fragment 1 and prethrombin 1 from it. Hydrolyzes bovine factor X heavy chain, but the cleavage does not produce an activated factor Xa heavy chain. No hydrolysis or activation of plasminogen. The ability to degrade some of the ECM, BM and plasma proteins is likely the main contributor to its hemorrhagic activity. Inhibits platelet aggregation induced by collagen in vitro. Its binding to glycosaminoglycans (GAGs) may assist in concentrating it in the proximity of blood vessel walls enabling in vivo degradation of BM protein components. Cytotoxic to cultured HeLa cancer cells in a concentration- and time-dependent manner. In the solubilized BM preparation (Matrigel), it induces morphological changes in the HeLa cells and inhibits their adhesion, however, the viability of the cells is not reduced.</text>
</comment>
<comment type="cofactor">
    <cofactor evidence="2">
        <name>Zn(2+)</name>
        <dbReference type="ChEBI" id="CHEBI:29105"/>
    </cofactor>
    <text evidence="2">Binds 1 zinc ion per subunit.</text>
</comment>
<comment type="activity regulation">
    <text evidence="8">The proteolytic activity of the heterodimer of A and B subunits requires Zn(2+) and Ca(2+) ions.</text>
</comment>
<comment type="biophysicochemical properties">
    <phDependence>
        <text evidence="8">The heterodimer of A and B subunits is structurally stable between pH 5-8 in the presence of Ca(2+) and Zn(2+) ions. Stability decreases significantly in the presence of imidazole and glycine. Addition at nanomolar concentrations of glycosaminoglycans (GAGs), such as chondroitin sulfate, dermatan sulfate or hyaluronic acid to the buffer, increases its stability.</text>
    </phDependence>
</comment>
<comment type="subunit">
    <text evidence="8 10">Homodimer; disulfide-linked (Probable). Heterodimer of A and B subunits; disulfide-linked.</text>
</comment>
<comment type="subcellular location">
    <subcellularLocation>
        <location evidence="8">Secreted</location>
    </subcellularLocation>
</comment>
<comment type="tissue specificity">
    <text evidence="8">Expressed by the venom gland (at protein level). Expressed by the venom gland.</text>
</comment>
<comment type="PTM">
    <text evidence="8">N-glycosylated.</text>
</comment>
<comment type="PTM">
    <text evidence="8">The N-terminus is blocked.</text>
</comment>
<comment type="similarity">
    <text evidence="9">Belongs to the venom metalloproteinase (M12B) family. P-III subfamily.</text>
</comment>
<keyword id="KW-0106">Calcium</keyword>
<keyword id="KW-1217">Cell adhesion impairing toxin</keyword>
<keyword id="KW-0903">Direct protein sequencing</keyword>
<keyword id="KW-1015">Disulfide bond</keyword>
<keyword id="KW-1206">Fibrinogenolytic toxin</keyword>
<keyword id="KW-0325">Glycoprotein</keyword>
<keyword id="KW-1200">Hemorrhagic toxin</keyword>
<keyword id="KW-1199">Hemostasis impairing toxin</keyword>
<keyword id="KW-0378">Hydrolase</keyword>
<keyword id="KW-0479">Metal-binding</keyword>
<keyword id="KW-0482">Metalloprotease</keyword>
<keyword id="KW-1201">Platelet aggregation inhibiting toxin</keyword>
<keyword id="KW-0645">Protease</keyword>
<keyword id="KW-0873">Pyrrolidone carboxylic acid</keyword>
<keyword id="KW-0964">Secreted</keyword>
<keyword id="KW-0732">Signal</keyword>
<keyword id="KW-0800">Toxin</keyword>
<keyword id="KW-0862">Zinc</keyword>
<keyword id="KW-0865">Zymogen</keyword>
<name>VMH4A_VIPAA</name>
<organism evidence="12">
    <name type="scientific">Vipera ammodytes ammodytes</name>
    <name type="common">Western sand viper</name>
    <dbReference type="NCBI Taxonomy" id="8705"/>
    <lineage>
        <taxon>Eukaryota</taxon>
        <taxon>Metazoa</taxon>
        <taxon>Chordata</taxon>
        <taxon>Craniata</taxon>
        <taxon>Vertebrata</taxon>
        <taxon>Euteleostomi</taxon>
        <taxon>Lepidosauria</taxon>
        <taxon>Squamata</taxon>
        <taxon>Bifurcata</taxon>
        <taxon>Unidentata</taxon>
        <taxon>Episquamata</taxon>
        <taxon>Toxicofera</taxon>
        <taxon>Serpentes</taxon>
        <taxon>Colubroidea</taxon>
        <taxon>Viperidae</taxon>
        <taxon>Viperinae</taxon>
        <taxon>Vipera</taxon>
    </lineage>
</organism>
<feature type="signal peptide" evidence="3">
    <location>
        <begin position="1"/>
        <end position="20"/>
    </location>
</feature>
<feature type="propeptide" id="PRO_0000457378" evidence="3 11">
    <location>
        <begin position="21"/>
        <end position="193"/>
    </location>
</feature>
<feature type="chain" id="PRO_5004740929" description="Zinc metalloproteinase-disintegrin-like protein H4 subunit A" evidence="11">
    <location>
        <begin position="194"/>
        <end position="614"/>
    </location>
</feature>
<feature type="domain" description="Peptidase M12B" evidence="5">
    <location>
        <begin position="201"/>
        <end position="397"/>
    </location>
</feature>
<feature type="domain" description="Disintegrin" evidence="4">
    <location>
        <begin position="405"/>
        <end position="491"/>
    </location>
</feature>
<feature type="short sequence motif" description="Metal-binding" evidence="10">
    <location>
        <begin position="337"/>
        <end position="348"/>
    </location>
</feature>
<feature type="short sequence motif" description="D/ECD-tripeptide" evidence="11">
    <location>
        <begin position="469"/>
        <end position="471"/>
    </location>
</feature>
<feature type="active site" description="Proton acceptor" evidence="5 7 10">
    <location>
        <position position="338"/>
    </location>
</feature>
<feature type="binding site" evidence="2 5 7">
    <location>
        <position position="337"/>
    </location>
    <ligand>
        <name>Zn(2+)</name>
        <dbReference type="ChEBI" id="CHEBI:29105"/>
        <note>catalytic</note>
    </ligand>
</feature>
<feature type="binding site" evidence="2 5 7">
    <location>
        <position position="341"/>
    </location>
    <ligand>
        <name>Zn(2+)</name>
        <dbReference type="ChEBI" id="CHEBI:29105"/>
        <note>catalytic</note>
    </ligand>
</feature>
<feature type="binding site" evidence="2 5">
    <location>
        <position position="347"/>
    </location>
    <ligand>
        <name>Zn(2+)</name>
        <dbReference type="ChEBI" id="CHEBI:29105"/>
        <note>catalytic</note>
    </ligand>
</feature>
<feature type="binding site" evidence="2">
    <location>
        <position position="410"/>
    </location>
    <ligand>
        <name>Ca(2+)</name>
        <dbReference type="ChEBI" id="CHEBI:29108"/>
        <label>1</label>
    </ligand>
</feature>
<feature type="binding site" evidence="2">
    <location>
        <position position="412"/>
    </location>
    <ligand>
        <name>Ca(2+)</name>
        <dbReference type="ChEBI" id="CHEBI:29108"/>
        <label>1</label>
    </ligand>
</feature>
<feature type="binding site" evidence="2">
    <location>
        <position position="414"/>
    </location>
    <ligand>
        <name>Ca(2+)</name>
        <dbReference type="ChEBI" id="CHEBI:29108"/>
        <label>1</label>
    </ligand>
</feature>
<feature type="binding site" evidence="2">
    <location>
        <position position="417"/>
    </location>
    <ligand>
        <name>Ca(2+)</name>
        <dbReference type="ChEBI" id="CHEBI:29108"/>
        <label>1</label>
    </ligand>
</feature>
<feature type="binding site" evidence="2">
    <location>
        <position position="420"/>
    </location>
    <ligand>
        <name>Ca(2+)</name>
        <dbReference type="ChEBI" id="CHEBI:29108"/>
        <label>1</label>
    </ligand>
</feature>
<feature type="binding site" evidence="2">
    <location>
        <position position="471"/>
    </location>
    <ligand>
        <name>Ca(2+)</name>
        <dbReference type="ChEBI" id="CHEBI:29108"/>
        <label>2</label>
    </ligand>
</feature>
<feature type="binding site" evidence="2">
    <location>
        <position position="486"/>
    </location>
    <ligand>
        <name>Ca(2+)</name>
        <dbReference type="ChEBI" id="CHEBI:29108"/>
        <label>2</label>
    </ligand>
</feature>
<feature type="modified residue" description="Pyrrolidone carboxylic acid (Glu)" evidence="1">
    <location>
        <position position="194"/>
    </location>
</feature>
<feature type="glycosylation site" description="N-linked (GlcNAc...) asparagine" evidence="2 6">
    <location>
        <position position="220"/>
    </location>
</feature>
<feature type="glycosylation site" description="N-linked (GlcNAc...) asparagine" evidence="6">
    <location>
        <position position="433"/>
    </location>
</feature>
<feature type="disulfide bond" evidence="5">
    <location>
        <begin position="312"/>
        <end position="392"/>
    </location>
</feature>
<feature type="disulfide bond" description="Interchain. Interchain (with B subunit)" evidence="11">
    <location>
        <position position="325"/>
    </location>
</feature>
<feature type="disulfide bond" evidence="5">
    <location>
        <begin position="352"/>
        <end position="376"/>
    </location>
</feature>
<feature type="disulfide bond" evidence="5">
    <location>
        <begin position="354"/>
        <end position="359"/>
    </location>
</feature>
<feature type="disulfide bond" evidence="2">
    <location>
        <begin position="408"/>
        <end position="437"/>
    </location>
</feature>
<feature type="disulfide bond" evidence="2">
    <location>
        <begin position="419"/>
        <end position="432"/>
    </location>
</feature>
<feature type="disulfide bond" evidence="2">
    <location>
        <begin position="421"/>
        <end position="427"/>
    </location>
</feature>
<feature type="disulfide bond" evidence="2">
    <location>
        <begin position="431"/>
        <end position="454"/>
    </location>
</feature>
<feature type="disulfide bond" evidence="2">
    <location>
        <begin position="445"/>
        <end position="451"/>
    </location>
</feature>
<feature type="disulfide bond" evidence="2">
    <location>
        <begin position="450"/>
        <end position="476"/>
    </location>
</feature>
<feature type="disulfide bond" evidence="4">
    <location>
        <begin position="463"/>
        <end position="483"/>
    </location>
</feature>
<feature type="disulfide bond" evidence="2">
    <location>
        <begin position="470"/>
        <end position="502"/>
    </location>
</feature>
<feature type="disulfide bond" evidence="2">
    <location>
        <begin position="495"/>
        <end position="507"/>
    </location>
</feature>
<feature type="disulfide bond" evidence="2">
    <location>
        <begin position="514"/>
        <end position="564"/>
    </location>
</feature>
<feature type="disulfide bond" evidence="2">
    <location>
        <begin position="529"/>
        <end position="575"/>
    </location>
</feature>
<feature type="disulfide bond" evidence="2">
    <location>
        <begin position="542"/>
        <end position="552"/>
    </location>
</feature>
<feature type="disulfide bond" evidence="2">
    <location>
        <begin position="559"/>
        <end position="601"/>
    </location>
</feature>
<feature type="disulfide bond" evidence="2">
    <location>
        <begin position="595"/>
        <end position="607"/>
    </location>
</feature>
<evidence type="ECO:0000250" key="1">
    <source>
        <dbReference type="UniProtKB" id="P0DM89"/>
    </source>
</evidence>
<evidence type="ECO:0000250" key="2">
    <source>
        <dbReference type="UniProtKB" id="Q9DGB9"/>
    </source>
</evidence>
<evidence type="ECO:0000255" key="3"/>
<evidence type="ECO:0000255" key="4">
    <source>
        <dbReference type="PROSITE-ProRule" id="PRU00068"/>
    </source>
</evidence>
<evidence type="ECO:0000255" key="5">
    <source>
        <dbReference type="PROSITE-ProRule" id="PRU00276"/>
    </source>
</evidence>
<evidence type="ECO:0000255" key="6">
    <source>
        <dbReference type="PROSITE-ProRule" id="PRU00498"/>
    </source>
</evidence>
<evidence type="ECO:0000255" key="7">
    <source>
        <dbReference type="PROSITE-ProRule" id="PRU10095"/>
    </source>
</evidence>
<evidence type="ECO:0000269" key="8">
    <source>
    </source>
</evidence>
<evidence type="ECO:0000303" key="9">
    <source>
    </source>
</evidence>
<evidence type="ECO:0000305" key="10"/>
<evidence type="ECO:0000305" key="11">
    <source>
    </source>
</evidence>
<evidence type="ECO:0000312" key="12">
    <source>
        <dbReference type="EMBL" id="AHB62069.1"/>
    </source>
</evidence>
<sequence length="614" mass="68662">MIQPLLVVTCLVVFPYQVSSIILESGNVNDYEVVYPQKVTSLPKGAVQQPEQKYEDTMQYEFKVNGEPVVLHLEKNKGLFSEDYSETHYSPDGREITTNPPVEDHCYYHGHIQNEADSTASISACNGLKGHFKLQGETYLIEPLKIPESEAHAVYKYENIEKEDEAPKMCGVTETNWESDEPIRKASQLVATSEQRRNIQKYIELVIVVDNVMFRKYTGNSTAIRTRIYEIVNTLNVVFRNVHIFVALVGIEIWNKKDQIKVKSAESVTLDLFGDWREKDLLRRKRHDNAQLLTGIDLNEQTLGIAPMSGMCKPKSSVGLIQDYCKSYLLVAIVMAHELGHNLGMDHDDGNCICREMPCIMSPEAGSKPAFYFSDCSWNQYQKFRNDIKSKCIDNKPLKTDIVSPAFCGNYFVEEGEECDCGFPGNCRNPCCNATTCKLTPGSECGDGECCDQCRIQTAGTECRPAWDECDVPEYCTGQSAECPTDVLQRNGQPCKNNNGYCYNGVCPILTNQCISLFGSSVTVAPDRCFNNNLQGTENFHCGMENGRYIKCKPQDKKCGRLFCVEPPTGGGINCKSIRSEGDPDHGMVDLGTKCADGKVCNSNRQCVDVNTAY</sequence>
<accession>V5TBK6</accession>
<protein>
    <recommendedName>
        <fullName evidence="10">Zinc metalloproteinase-disintegrin-like protein H4 subunit A</fullName>
        <ecNumber evidence="8">3.4.24.-</ecNumber>
    </recommendedName>
    <alternativeName>
        <fullName evidence="9">Hemorrhagin 4 subunit A</fullName>
    </alternativeName>
    <alternativeName>
        <fullName evidence="12">Metalloproteinase H4-A</fullName>
    </alternativeName>
    <alternativeName>
        <fullName evidence="9">P-III metalloproteinase H4 subunit A</fullName>
    </alternativeName>
    <alternativeName>
        <fullName evidence="9">Snake venom metalloproteinase</fullName>
        <shortName evidence="9">SVMP</shortName>
    </alternativeName>
    <alternativeName>
        <fullName evidence="9">VaH4-A</fullName>
    </alternativeName>
</protein>
<dbReference type="EC" id="3.4.24.-" evidence="8"/>
<dbReference type="EMBL" id="KF534721">
    <property type="protein sequence ID" value="AHB62069.1"/>
    <property type="molecule type" value="mRNA"/>
</dbReference>
<dbReference type="SMR" id="V5TBK6"/>
<dbReference type="MEROPS" id="M12.162"/>
<dbReference type="BRENDA" id="3.4.24.B35">
    <property type="organism ID" value="10997"/>
</dbReference>
<dbReference type="GO" id="GO:0005576">
    <property type="term" value="C:extracellular region"/>
    <property type="evidence" value="ECO:0007669"/>
    <property type="project" value="UniProtKB-SubCell"/>
</dbReference>
<dbReference type="GO" id="GO:0005886">
    <property type="term" value="C:plasma membrane"/>
    <property type="evidence" value="ECO:0007669"/>
    <property type="project" value="TreeGrafter"/>
</dbReference>
<dbReference type="GO" id="GO:0046872">
    <property type="term" value="F:metal ion binding"/>
    <property type="evidence" value="ECO:0007669"/>
    <property type="project" value="UniProtKB-KW"/>
</dbReference>
<dbReference type="GO" id="GO:0004222">
    <property type="term" value="F:metalloendopeptidase activity"/>
    <property type="evidence" value="ECO:0007669"/>
    <property type="project" value="InterPro"/>
</dbReference>
<dbReference type="GO" id="GO:0090729">
    <property type="term" value="F:toxin activity"/>
    <property type="evidence" value="ECO:0007669"/>
    <property type="project" value="UniProtKB-KW"/>
</dbReference>
<dbReference type="GO" id="GO:0006508">
    <property type="term" value="P:proteolysis"/>
    <property type="evidence" value="ECO:0007669"/>
    <property type="project" value="UniProtKB-KW"/>
</dbReference>
<dbReference type="CDD" id="cd04269">
    <property type="entry name" value="ZnMc_adamalysin_II_like"/>
    <property type="match status" value="1"/>
</dbReference>
<dbReference type="FunFam" id="3.40.390.10:FF:000002">
    <property type="entry name" value="Disintegrin and metalloproteinase domain-containing protein 22"/>
    <property type="match status" value="1"/>
</dbReference>
<dbReference type="FunFam" id="4.10.70.10:FF:000001">
    <property type="entry name" value="Disintegrin and metalloproteinase domain-containing protein 22"/>
    <property type="match status" value="1"/>
</dbReference>
<dbReference type="Gene3D" id="3.40.390.10">
    <property type="entry name" value="Collagenase (Catalytic Domain)"/>
    <property type="match status" value="1"/>
</dbReference>
<dbReference type="Gene3D" id="4.10.70.10">
    <property type="entry name" value="Disintegrin domain"/>
    <property type="match status" value="1"/>
</dbReference>
<dbReference type="InterPro" id="IPR006586">
    <property type="entry name" value="ADAM_Cys-rich"/>
</dbReference>
<dbReference type="InterPro" id="IPR018358">
    <property type="entry name" value="Disintegrin_CS"/>
</dbReference>
<dbReference type="InterPro" id="IPR001762">
    <property type="entry name" value="Disintegrin_dom"/>
</dbReference>
<dbReference type="InterPro" id="IPR036436">
    <property type="entry name" value="Disintegrin_dom_sf"/>
</dbReference>
<dbReference type="InterPro" id="IPR024079">
    <property type="entry name" value="MetalloPept_cat_dom_sf"/>
</dbReference>
<dbReference type="InterPro" id="IPR001590">
    <property type="entry name" value="Peptidase_M12B"/>
</dbReference>
<dbReference type="InterPro" id="IPR002870">
    <property type="entry name" value="Peptidase_M12B_N"/>
</dbReference>
<dbReference type="InterPro" id="IPR034027">
    <property type="entry name" value="Reprolysin_adamalysin"/>
</dbReference>
<dbReference type="PANTHER" id="PTHR11905">
    <property type="entry name" value="ADAM A DISINTEGRIN AND METALLOPROTEASE DOMAIN"/>
    <property type="match status" value="1"/>
</dbReference>
<dbReference type="PANTHER" id="PTHR11905:SF32">
    <property type="entry name" value="DISINTEGRIN AND METALLOPROTEINASE DOMAIN-CONTAINING PROTEIN 28"/>
    <property type="match status" value="1"/>
</dbReference>
<dbReference type="Pfam" id="PF08516">
    <property type="entry name" value="ADAM_CR"/>
    <property type="match status" value="1"/>
</dbReference>
<dbReference type="Pfam" id="PF00200">
    <property type="entry name" value="Disintegrin"/>
    <property type="match status" value="1"/>
</dbReference>
<dbReference type="Pfam" id="PF01562">
    <property type="entry name" value="Pep_M12B_propep"/>
    <property type="match status" value="1"/>
</dbReference>
<dbReference type="Pfam" id="PF01421">
    <property type="entry name" value="Reprolysin"/>
    <property type="match status" value="1"/>
</dbReference>
<dbReference type="PRINTS" id="PR00289">
    <property type="entry name" value="DISINTEGRIN"/>
</dbReference>
<dbReference type="SMART" id="SM00608">
    <property type="entry name" value="ACR"/>
    <property type="match status" value="1"/>
</dbReference>
<dbReference type="SMART" id="SM00050">
    <property type="entry name" value="DISIN"/>
    <property type="match status" value="1"/>
</dbReference>
<dbReference type="SUPFAM" id="SSF57552">
    <property type="entry name" value="Blood coagulation inhibitor (disintegrin)"/>
    <property type="match status" value="1"/>
</dbReference>
<dbReference type="SUPFAM" id="SSF55486">
    <property type="entry name" value="Metalloproteases ('zincins'), catalytic domain"/>
    <property type="match status" value="1"/>
</dbReference>
<dbReference type="PROSITE" id="PS50215">
    <property type="entry name" value="ADAM_MEPRO"/>
    <property type="match status" value="1"/>
</dbReference>
<dbReference type="PROSITE" id="PS00427">
    <property type="entry name" value="DISINTEGRIN_1"/>
    <property type="match status" value="1"/>
</dbReference>
<dbReference type="PROSITE" id="PS50214">
    <property type="entry name" value="DISINTEGRIN_2"/>
    <property type="match status" value="1"/>
</dbReference>
<dbReference type="PROSITE" id="PS00142">
    <property type="entry name" value="ZINC_PROTEASE"/>
    <property type="match status" value="1"/>
</dbReference>